<protein>
    <recommendedName>
        <fullName evidence="1">Large ribosomal subunit protein bL33</fullName>
    </recommendedName>
    <alternativeName>
        <fullName evidence="3">50S ribosomal protein L33</fullName>
    </alternativeName>
</protein>
<sequence>MATKGGREKIKLESTAGTGHFYTTSKNKKTMPEKMLIKKFDPKARKHVDYKEMKLK</sequence>
<keyword id="KW-1185">Reference proteome</keyword>
<keyword id="KW-0687">Ribonucleoprotein</keyword>
<keyword id="KW-0689">Ribosomal protein</keyword>
<comment type="similarity">
    <text evidence="1">Belongs to the bacterial ribosomal protein bL33 family.</text>
</comment>
<proteinExistence type="inferred from homology"/>
<organism>
    <name type="scientific">Albidiferax ferrireducens (strain ATCC BAA-621 / DSM 15236 / T118)</name>
    <name type="common">Rhodoferax ferrireducens</name>
    <dbReference type="NCBI Taxonomy" id="338969"/>
    <lineage>
        <taxon>Bacteria</taxon>
        <taxon>Pseudomonadati</taxon>
        <taxon>Pseudomonadota</taxon>
        <taxon>Betaproteobacteria</taxon>
        <taxon>Burkholderiales</taxon>
        <taxon>Comamonadaceae</taxon>
        <taxon>Rhodoferax</taxon>
    </lineage>
</organism>
<gene>
    <name evidence="1" type="primary">rpmG</name>
    <name type="ordered locus">Rfer_3181</name>
</gene>
<reference key="1">
    <citation type="submission" date="2006-02" db="EMBL/GenBank/DDBJ databases">
        <title>Complete sequence of chromosome of Rhodoferax ferrireducens DSM 15236.</title>
        <authorList>
            <person name="Copeland A."/>
            <person name="Lucas S."/>
            <person name="Lapidus A."/>
            <person name="Barry K."/>
            <person name="Detter J.C."/>
            <person name="Glavina del Rio T."/>
            <person name="Hammon N."/>
            <person name="Israni S."/>
            <person name="Pitluck S."/>
            <person name="Brettin T."/>
            <person name="Bruce D."/>
            <person name="Han C."/>
            <person name="Tapia R."/>
            <person name="Gilna P."/>
            <person name="Kiss H."/>
            <person name="Schmutz J."/>
            <person name="Larimer F."/>
            <person name="Land M."/>
            <person name="Kyrpides N."/>
            <person name="Ivanova N."/>
            <person name="Richardson P."/>
        </authorList>
    </citation>
    <scope>NUCLEOTIDE SEQUENCE [LARGE SCALE GENOMIC DNA]</scope>
    <source>
        <strain>ATCC BAA-621 / DSM 15236 / T118</strain>
    </source>
</reference>
<feature type="chain" id="PRO_1000004184" description="Large ribosomal subunit protein bL33">
    <location>
        <begin position="1"/>
        <end position="56"/>
    </location>
</feature>
<feature type="region of interest" description="Disordered" evidence="2">
    <location>
        <begin position="1"/>
        <end position="28"/>
    </location>
</feature>
<feature type="compositionally biased region" description="Basic and acidic residues" evidence="2">
    <location>
        <begin position="1"/>
        <end position="12"/>
    </location>
</feature>
<feature type="compositionally biased region" description="Polar residues" evidence="2">
    <location>
        <begin position="15"/>
        <end position="25"/>
    </location>
</feature>
<accession>Q21TL3</accession>
<evidence type="ECO:0000255" key="1">
    <source>
        <dbReference type="HAMAP-Rule" id="MF_00294"/>
    </source>
</evidence>
<evidence type="ECO:0000256" key="2">
    <source>
        <dbReference type="SAM" id="MobiDB-lite"/>
    </source>
</evidence>
<evidence type="ECO:0000305" key="3"/>
<name>RL33_ALBFT</name>
<dbReference type="EMBL" id="CP000267">
    <property type="protein sequence ID" value="ABD70890.1"/>
    <property type="molecule type" value="Genomic_DNA"/>
</dbReference>
<dbReference type="RefSeq" id="WP_011465453.1">
    <property type="nucleotide sequence ID" value="NC_007908.1"/>
</dbReference>
<dbReference type="SMR" id="Q21TL3"/>
<dbReference type="STRING" id="338969.Rfer_3181"/>
<dbReference type="KEGG" id="rfr:Rfer_3181"/>
<dbReference type="eggNOG" id="COG0267">
    <property type="taxonomic scope" value="Bacteria"/>
</dbReference>
<dbReference type="HOGENOM" id="CLU_190949_1_1_4"/>
<dbReference type="OrthoDB" id="21586at2"/>
<dbReference type="Proteomes" id="UP000008332">
    <property type="component" value="Chromosome"/>
</dbReference>
<dbReference type="GO" id="GO:0022625">
    <property type="term" value="C:cytosolic large ribosomal subunit"/>
    <property type="evidence" value="ECO:0007669"/>
    <property type="project" value="TreeGrafter"/>
</dbReference>
<dbReference type="GO" id="GO:0003735">
    <property type="term" value="F:structural constituent of ribosome"/>
    <property type="evidence" value="ECO:0007669"/>
    <property type="project" value="InterPro"/>
</dbReference>
<dbReference type="GO" id="GO:0006412">
    <property type="term" value="P:translation"/>
    <property type="evidence" value="ECO:0007669"/>
    <property type="project" value="UniProtKB-UniRule"/>
</dbReference>
<dbReference type="Gene3D" id="2.20.28.120">
    <property type="entry name" value="Ribosomal protein L33"/>
    <property type="match status" value="1"/>
</dbReference>
<dbReference type="HAMAP" id="MF_00294">
    <property type="entry name" value="Ribosomal_bL33"/>
    <property type="match status" value="1"/>
</dbReference>
<dbReference type="InterPro" id="IPR001705">
    <property type="entry name" value="Ribosomal_bL33"/>
</dbReference>
<dbReference type="InterPro" id="IPR038584">
    <property type="entry name" value="Ribosomal_bL33_sf"/>
</dbReference>
<dbReference type="InterPro" id="IPR011332">
    <property type="entry name" value="Ribosomal_zn-bd"/>
</dbReference>
<dbReference type="NCBIfam" id="NF001860">
    <property type="entry name" value="PRK00595.1"/>
    <property type="match status" value="1"/>
</dbReference>
<dbReference type="NCBIfam" id="TIGR01023">
    <property type="entry name" value="rpmG_bact"/>
    <property type="match status" value="1"/>
</dbReference>
<dbReference type="PANTHER" id="PTHR15238">
    <property type="entry name" value="54S RIBOSOMAL PROTEIN L39, MITOCHONDRIAL"/>
    <property type="match status" value="1"/>
</dbReference>
<dbReference type="PANTHER" id="PTHR15238:SF1">
    <property type="entry name" value="LARGE RIBOSOMAL SUBUNIT PROTEIN BL33M"/>
    <property type="match status" value="1"/>
</dbReference>
<dbReference type="Pfam" id="PF00471">
    <property type="entry name" value="Ribosomal_L33"/>
    <property type="match status" value="1"/>
</dbReference>
<dbReference type="SUPFAM" id="SSF57829">
    <property type="entry name" value="Zn-binding ribosomal proteins"/>
    <property type="match status" value="1"/>
</dbReference>